<name>CADM3_HUMAN</name>
<sequence length="398" mass="43300">MGAPAASLLLLLLLFACCWAPGGANLSQDDSQPWTSDETVVAGGTVVLKCQVKDHEDSSLQWSNPAQQTLYFGEKRALRDNRIQLVTSTPHELSISISNVALADEGEYTCSIFTMPVRTAKSLVTVLGIPQKPIITGYKSSLREKDTATLNCQSSGSKPAARLTWRKGDQELHGEPTRIQEDPNGKTFTVSSSVTFQVTREDDGASIVCSVNHESLKGADRSTSQRIEVLYTPTAMIRPDPPHPREGQKLLLHCEGRGNPVPQQYLWEKEGSVPPLKMTQESALIFPFLNKSDSGTYGCTATSNMGSYKAYYTLNVNDPSPVPSSSSTYHAIIGGIVAFIVFLLLIMLIFLGHYLIRHKGTYLTHEAKGSDDAPDADTAIINAEGGQSGGDDKKEYFI</sequence>
<reference key="1">
    <citation type="journal article" date="2001" name="Oncogene">
        <title>Isolation of the TSLL1 and TSLL2 genes, members of the tumor suppressor TSLC1 gene family encoding transmembrane proteins.</title>
        <authorList>
            <person name="Fukuhara H."/>
            <person name="Kuramochi M."/>
            <person name="Nobukuni T."/>
            <person name="Fukami T."/>
            <person name="Saino M."/>
            <person name="Maruyama T."/>
            <person name="Nomura S."/>
            <person name="Sekiya T."/>
            <person name="Murakami Y."/>
        </authorList>
    </citation>
    <scope>NUCLEOTIDE SEQUENCE [MRNA] (ISOFORM 1)</scope>
    <scope>TISSUE SPECIFICITY</scope>
    <scope>INDUCTION</scope>
</reference>
<reference key="2">
    <citation type="journal article" date="2005" name="Biochim. Biophys. Acta">
        <title>Nectin-like molecule 1 is a protein 4.1N associated protein and recruits protein 4.1N from cytoplasm to the plasma membrane.</title>
        <authorList>
            <person name="Zhou Y."/>
            <person name="Du G."/>
            <person name="Hu X."/>
            <person name="Yu S."/>
            <person name="Liu Y."/>
            <person name="Xu Y."/>
            <person name="Huang X."/>
            <person name="Liu J."/>
            <person name="Yin B."/>
            <person name="Fan M."/>
            <person name="Peng X."/>
            <person name="Qiang B."/>
            <person name="Yuan J."/>
        </authorList>
    </citation>
    <scope>NUCLEOTIDE SEQUENCE [MRNA] (ISOFORM 2)</scope>
    <scope>TISSUE SPECIFICITY</scope>
</reference>
<reference key="3">
    <citation type="submission" date="2001-07" db="EMBL/GenBank/DDBJ databases">
        <authorList>
            <person name="Cunningham S.A."/>
            <person name="Tran T.M."/>
            <person name="Arrate M.P."/>
        </authorList>
    </citation>
    <scope>NUCLEOTIDE SEQUENCE [MRNA] (ISOFORM 1)</scope>
    <source>
        <tissue>Brain</tissue>
    </source>
</reference>
<reference key="4">
    <citation type="journal article" date="2003" name="Genome Res.">
        <title>The secreted protein discovery initiative (SPDI), a large-scale effort to identify novel human secreted and transmembrane proteins: a bioinformatics assessment.</title>
        <authorList>
            <person name="Clark H.F."/>
            <person name="Gurney A.L."/>
            <person name="Abaya E."/>
            <person name="Baker K."/>
            <person name="Baldwin D.T."/>
            <person name="Brush J."/>
            <person name="Chen J."/>
            <person name="Chow B."/>
            <person name="Chui C."/>
            <person name="Crowley C."/>
            <person name="Currell B."/>
            <person name="Deuel B."/>
            <person name="Dowd P."/>
            <person name="Eaton D."/>
            <person name="Foster J.S."/>
            <person name="Grimaldi C."/>
            <person name="Gu Q."/>
            <person name="Hass P.E."/>
            <person name="Heldens S."/>
            <person name="Huang A."/>
            <person name="Kim H.S."/>
            <person name="Klimowski L."/>
            <person name="Jin Y."/>
            <person name="Johnson S."/>
            <person name="Lee J."/>
            <person name="Lewis L."/>
            <person name="Liao D."/>
            <person name="Mark M.R."/>
            <person name="Robbie E."/>
            <person name="Sanchez C."/>
            <person name="Schoenfeld J."/>
            <person name="Seshagiri S."/>
            <person name="Simmons L."/>
            <person name="Singh J."/>
            <person name="Smith V."/>
            <person name="Stinson J."/>
            <person name="Vagts A."/>
            <person name="Vandlen R.L."/>
            <person name="Watanabe C."/>
            <person name="Wieand D."/>
            <person name="Woods K."/>
            <person name="Xie M.-H."/>
            <person name="Yansura D.G."/>
            <person name="Yi S."/>
            <person name="Yu G."/>
            <person name="Yuan J."/>
            <person name="Zhang M."/>
            <person name="Zhang Z."/>
            <person name="Goddard A.D."/>
            <person name="Wood W.I."/>
            <person name="Godowski P.J."/>
            <person name="Gray A.M."/>
        </authorList>
    </citation>
    <scope>NUCLEOTIDE SEQUENCE [LARGE SCALE MRNA] (ISOFORM 1)</scope>
</reference>
<reference key="5">
    <citation type="journal article" date="2006" name="Nature">
        <title>The DNA sequence and biological annotation of human chromosome 1.</title>
        <authorList>
            <person name="Gregory S.G."/>
            <person name="Barlow K.F."/>
            <person name="McLay K.E."/>
            <person name="Kaul R."/>
            <person name="Swarbreck D."/>
            <person name="Dunham A."/>
            <person name="Scott C.E."/>
            <person name="Howe K.L."/>
            <person name="Woodfine K."/>
            <person name="Spencer C.C.A."/>
            <person name="Jones M.C."/>
            <person name="Gillson C."/>
            <person name="Searle S."/>
            <person name="Zhou Y."/>
            <person name="Kokocinski F."/>
            <person name="McDonald L."/>
            <person name="Evans R."/>
            <person name="Phillips K."/>
            <person name="Atkinson A."/>
            <person name="Cooper R."/>
            <person name="Jones C."/>
            <person name="Hall R.E."/>
            <person name="Andrews T.D."/>
            <person name="Lloyd C."/>
            <person name="Ainscough R."/>
            <person name="Almeida J.P."/>
            <person name="Ambrose K.D."/>
            <person name="Anderson F."/>
            <person name="Andrew R.W."/>
            <person name="Ashwell R.I.S."/>
            <person name="Aubin K."/>
            <person name="Babbage A.K."/>
            <person name="Bagguley C.L."/>
            <person name="Bailey J."/>
            <person name="Beasley H."/>
            <person name="Bethel G."/>
            <person name="Bird C.P."/>
            <person name="Bray-Allen S."/>
            <person name="Brown J.Y."/>
            <person name="Brown A.J."/>
            <person name="Buckley D."/>
            <person name="Burton J."/>
            <person name="Bye J."/>
            <person name="Carder C."/>
            <person name="Chapman J.C."/>
            <person name="Clark S.Y."/>
            <person name="Clarke G."/>
            <person name="Clee C."/>
            <person name="Cobley V."/>
            <person name="Collier R.E."/>
            <person name="Corby N."/>
            <person name="Coville G.J."/>
            <person name="Davies J."/>
            <person name="Deadman R."/>
            <person name="Dunn M."/>
            <person name="Earthrowl M."/>
            <person name="Ellington A.G."/>
            <person name="Errington H."/>
            <person name="Frankish A."/>
            <person name="Frankland J."/>
            <person name="French L."/>
            <person name="Garner P."/>
            <person name="Garnett J."/>
            <person name="Gay L."/>
            <person name="Ghori M.R.J."/>
            <person name="Gibson R."/>
            <person name="Gilby L.M."/>
            <person name="Gillett W."/>
            <person name="Glithero R.J."/>
            <person name="Grafham D.V."/>
            <person name="Griffiths C."/>
            <person name="Griffiths-Jones S."/>
            <person name="Grocock R."/>
            <person name="Hammond S."/>
            <person name="Harrison E.S.I."/>
            <person name="Hart E."/>
            <person name="Haugen E."/>
            <person name="Heath P.D."/>
            <person name="Holmes S."/>
            <person name="Holt K."/>
            <person name="Howden P.J."/>
            <person name="Hunt A.R."/>
            <person name="Hunt S.E."/>
            <person name="Hunter G."/>
            <person name="Isherwood J."/>
            <person name="James R."/>
            <person name="Johnson C."/>
            <person name="Johnson D."/>
            <person name="Joy A."/>
            <person name="Kay M."/>
            <person name="Kershaw J.K."/>
            <person name="Kibukawa M."/>
            <person name="Kimberley A.M."/>
            <person name="King A."/>
            <person name="Knights A.J."/>
            <person name="Lad H."/>
            <person name="Laird G."/>
            <person name="Lawlor S."/>
            <person name="Leongamornlert D.A."/>
            <person name="Lloyd D.M."/>
            <person name="Loveland J."/>
            <person name="Lovell J."/>
            <person name="Lush M.J."/>
            <person name="Lyne R."/>
            <person name="Martin S."/>
            <person name="Mashreghi-Mohammadi M."/>
            <person name="Matthews L."/>
            <person name="Matthews N.S.W."/>
            <person name="McLaren S."/>
            <person name="Milne S."/>
            <person name="Mistry S."/>
            <person name="Moore M.J.F."/>
            <person name="Nickerson T."/>
            <person name="O'Dell C.N."/>
            <person name="Oliver K."/>
            <person name="Palmeiri A."/>
            <person name="Palmer S.A."/>
            <person name="Parker A."/>
            <person name="Patel D."/>
            <person name="Pearce A.V."/>
            <person name="Peck A.I."/>
            <person name="Pelan S."/>
            <person name="Phelps K."/>
            <person name="Phillimore B.J."/>
            <person name="Plumb R."/>
            <person name="Rajan J."/>
            <person name="Raymond C."/>
            <person name="Rouse G."/>
            <person name="Saenphimmachak C."/>
            <person name="Sehra H.K."/>
            <person name="Sheridan E."/>
            <person name="Shownkeen R."/>
            <person name="Sims S."/>
            <person name="Skuce C.D."/>
            <person name="Smith M."/>
            <person name="Steward C."/>
            <person name="Subramanian S."/>
            <person name="Sycamore N."/>
            <person name="Tracey A."/>
            <person name="Tromans A."/>
            <person name="Van Helmond Z."/>
            <person name="Wall M."/>
            <person name="Wallis J.M."/>
            <person name="White S."/>
            <person name="Whitehead S.L."/>
            <person name="Wilkinson J.E."/>
            <person name="Willey D.L."/>
            <person name="Williams H."/>
            <person name="Wilming L."/>
            <person name="Wray P.W."/>
            <person name="Wu Z."/>
            <person name="Coulson A."/>
            <person name="Vaudin M."/>
            <person name="Sulston J.E."/>
            <person name="Durbin R.M."/>
            <person name="Hubbard T."/>
            <person name="Wooster R."/>
            <person name="Dunham I."/>
            <person name="Carter N.P."/>
            <person name="McVean G."/>
            <person name="Ross M.T."/>
            <person name="Harrow J."/>
            <person name="Olson M.V."/>
            <person name="Beck S."/>
            <person name="Rogers J."/>
            <person name="Bentley D.R."/>
        </authorList>
    </citation>
    <scope>NUCLEOTIDE SEQUENCE [LARGE SCALE GENOMIC DNA]</scope>
    <scope>ALTERNATIVE SPLICING</scope>
</reference>
<reference key="6">
    <citation type="submission" date="2002-07" db="EMBL/GenBank/DDBJ databases">
        <title>Alternatively splicing forms of the human nectin V gene.</title>
        <authorList>
            <person name="Keryanov S.A."/>
            <person name="Gardner K.L."/>
        </authorList>
    </citation>
    <scope>NUCLEOTIDE SEQUENCE [MRNA] OF 1-280 (ISOFORM 3)</scope>
</reference>
<reference key="7">
    <citation type="journal article" date="2004" name="Protein Sci.">
        <title>Signal peptide prediction based on analysis of experimentally verified cleavage sites.</title>
        <authorList>
            <person name="Zhang Z."/>
            <person name="Henzel W.J."/>
        </authorList>
    </citation>
    <scope>PROTEIN SEQUENCE OF 25-39</scope>
</reference>
<reference key="8">
    <citation type="journal article" date="2004" name="Nat. Genet.">
        <title>Complete sequencing and characterization of 21,243 full-length human cDNAs.</title>
        <authorList>
            <person name="Ota T."/>
            <person name="Suzuki Y."/>
            <person name="Nishikawa T."/>
            <person name="Otsuki T."/>
            <person name="Sugiyama T."/>
            <person name="Irie R."/>
            <person name="Wakamatsu A."/>
            <person name="Hayashi K."/>
            <person name="Sato H."/>
            <person name="Nagai K."/>
            <person name="Kimura K."/>
            <person name="Makita H."/>
            <person name="Sekine M."/>
            <person name="Obayashi M."/>
            <person name="Nishi T."/>
            <person name="Shibahara T."/>
            <person name="Tanaka T."/>
            <person name="Ishii S."/>
            <person name="Yamamoto J."/>
            <person name="Saito K."/>
            <person name="Kawai Y."/>
            <person name="Isono Y."/>
            <person name="Nakamura Y."/>
            <person name="Nagahari K."/>
            <person name="Murakami K."/>
            <person name="Yasuda T."/>
            <person name="Iwayanagi T."/>
            <person name="Wagatsuma M."/>
            <person name="Shiratori A."/>
            <person name="Sudo H."/>
            <person name="Hosoiri T."/>
            <person name="Kaku Y."/>
            <person name="Kodaira H."/>
            <person name="Kondo H."/>
            <person name="Sugawara M."/>
            <person name="Takahashi M."/>
            <person name="Kanda K."/>
            <person name="Yokoi T."/>
            <person name="Furuya T."/>
            <person name="Kikkawa E."/>
            <person name="Omura Y."/>
            <person name="Abe K."/>
            <person name="Kamihara K."/>
            <person name="Katsuta N."/>
            <person name="Sato K."/>
            <person name="Tanikawa M."/>
            <person name="Yamazaki M."/>
            <person name="Ninomiya K."/>
            <person name="Ishibashi T."/>
            <person name="Yamashita H."/>
            <person name="Murakawa K."/>
            <person name="Fujimori K."/>
            <person name="Tanai H."/>
            <person name="Kimata M."/>
            <person name="Watanabe M."/>
            <person name="Hiraoka S."/>
            <person name="Chiba Y."/>
            <person name="Ishida S."/>
            <person name="Ono Y."/>
            <person name="Takiguchi S."/>
            <person name="Watanabe S."/>
            <person name="Yosida M."/>
            <person name="Hotuta T."/>
            <person name="Kusano J."/>
            <person name="Kanehori K."/>
            <person name="Takahashi-Fujii A."/>
            <person name="Hara H."/>
            <person name="Tanase T.-O."/>
            <person name="Nomura Y."/>
            <person name="Togiya S."/>
            <person name="Komai F."/>
            <person name="Hara R."/>
            <person name="Takeuchi K."/>
            <person name="Arita M."/>
            <person name="Imose N."/>
            <person name="Musashino K."/>
            <person name="Yuuki H."/>
            <person name="Oshima A."/>
            <person name="Sasaki N."/>
            <person name="Aotsuka S."/>
            <person name="Yoshikawa Y."/>
            <person name="Matsunawa H."/>
            <person name="Ichihara T."/>
            <person name="Shiohata N."/>
            <person name="Sano S."/>
            <person name="Moriya S."/>
            <person name="Momiyama H."/>
            <person name="Satoh N."/>
            <person name="Takami S."/>
            <person name="Terashima Y."/>
            <person name="Suzuki O."/>
            <person name="Nakagawa S."/>
            <person name="Senoh A."/>
            <person name="Mizoguchi H."/>
            <person name="Goto Y."/>
            <person name="Shimizu F."/>
            <person name="Wakebe H."/>
            <person name="Hishigaki H."/>
            <person name="Watanabe T."/>
            <person name="Sugiyama A."/>
            <person name="Takemoto M."/>
            <person name="Kawakami B."/>
            <person name="Yamazaki M."/>
            <person name="Watanabe K."/>
            <person name="Kumagai A."/>
            <person name="Itakura S."/>
            <person name="Fukuzumi Y."/>
            <person name="Fujimori Y."/>
            <person name="Komiyama M."/>
            <person name="Tashiro H."/>
            <person name="Tanigami A."/>
            <person name="Fujiwara T."/>
            <person name="Ono T."/>
            <person name="Yamada K."/>
            <person name="Fujii Y."/>
            <person name="Ozaki K."/>
            <person name="Hirao M."/>
            <person name="Ohmori Y."/>
            <person name="Kawabata A."/>
            <person name="Hikiji T."/>
            <person name="Kobatake N."/>
            <person name="Inagaki H."/>
            <person name="Ikema Y."/>
            <person name="Okamoto S."/>
            <person name="Okitani R."/>
            <person name="Kawakami T."/>
            <person name="Noguchi S."/>
            <person name="Itoh T."/>
            <person name="Shigeta K."/>
            <person name="Senba T."/>
            <person name="Matsumura K."/>
            <person name="Nakajima Y."/>
            <person name="Mizuno T."/>
            <person name="Morinaga M."/>
            <person name="Sasaki M."/>
            <person name="Togashi T."/>
            <person name="Oyama M."/>
            <person name="Hata H."/>
            <person name="Watanabe M."/>
            <person name="Komatsu T."/>
            <person name="Mizushima-Sugano J."/>
            <person name="Satoh T."/>
            <person name="Shirai Y."/>
            <person name="Takahashi Y."/>
            <person name="Nakagawa K."/>
            <person name="Okumura K."/>
            <person name="Nagase T."/>
            <person name="Nomura N."/>
            <person name="Kikuchi H."/>
            <person name="Masuho Y."/>
            <person name="Yamashita R."/>
            <person name="Nakai K."/>
            <person name="Yada T."/>
            <person name="Nakamura Y."/>
            <person name="Ohara O."/>
            <person name="Isogai T."/>
            <person name="Sugano S."/>
        </authorList>
    </citation>
    <scope>NUCLEOTIDE SEQUENCE [LARGE SCALE MRNA] OF 155-398</scope>
</reference>
<reference key="9">
    <citation type="journal article" date="2008" name="Biochim. Biophys. Acta">
        <title>Nectin-like molecule 1 is a glycoprotein with a single N-glycosylation site at N290KS which influences its adhesion activity.</title>
        <authorList>
            <person name="Gao J."/>
            <person name="Chen T."/>
            <person name="Hu G."/>
            <person name="Gong Y."/>
            <person name="Qiang B."/>
            <person name="Yuan J."/>
            <person name="Peng X."/>
        </authorList>
    </citation>
    <scope>TISSUE SPECIFICITY</scope>
    <scope>GLYCOSYLATION AT ASN-290</scope>
    <scope>LACK OF GLYCOSYLATION AT ASN-25</scope>
</reference>
<reference key="10">
    <citation type="journal article" date="2006" name="J. Biol. Chem.">
        <title>Crystal structure of the V domain of human Nectin-like molecule-1/Syncam3/Tsll1/Igsf4b, a neural tissue-specific immunoglobulin-like cell-cell adhesion molecule.</title>
        <authorList>
            <person name="Dong X."/>
            <person name="Xu F."/>
            <person name="Gong Y."/>
            <person name="Gao J."/>
            <person name="Lin P."/>
            <person name="Chen T."/>
            <person name="Peng Y."/>
            <person name="Qiang B."/>
            <person name="Yuan J."/>
            <person name="Peng X."/>
            <person name="Rao Z."/>
        </authorList>
    </citation>
    <scope>X-RAY CRYSTALLOGRAPHY (2.4 ANGSTROMS) OF 25-135</scope>
    <scope>SUBUNIT</scope>
    <scope>DISULFIDE BOND</scope>
</reference>
<reference key="11">
    <citation type="journal article" date="2021" name="Brain">
        <title>A CADM3 variant causes Charcot-Marie-Tooth disease with marked upper limb involvement.</title>
        <authorList>
            <person name="Rebelo A.P."/>
            <person name="Cortese A."/>
            <person name="Abraham A."/>
            <person name="Eshed-Eisenbach Y."/>
            <person name="Shner G."/>
            <person name="Vainshtein A."/>
            <person name="Buglo E."/>
            <person name="Camarena V."/>
            <person name="Gaidosh G."/>
            <person name="Shiekhattar R."/>
            <person name="Abreu L."/>
            <person name="Courel S."/>
            <person name="Burns D.K."/>
            <person name="Bai Y."/>
            <person name="Bacon C."/>
            <person name="Feely S.M.E."/>
            <person name="Castro D."/>
            <person name="Peles E."/>
            <person name="Reilly M.M."/>
            <person name="Shy M.E."/>
            <person name="Zuchner S."/>
        </authorList>
    </citation>
    <scope>VARIANT CMT2FF CYS-138</scope>
    <scope>INVOLVEMENT IN CMT2FF</scope>
    <scope>CHARACTERIZATION OF VARIANT CMT2FF CYS-138</scope>
</reference>
<reference key="12">
    <citation type="journal article" date="2021" name="Brain">
        <authorList>
            <person name="Rebelo A.P."/>
            <person name="Cortese A."/>
            <person name="Abraham A."/>
            <person name="Eshed-Eisenbach Y."/>
            <person name="Shner G."/>
            <person name="Vainshtein A."/>
            <person name="Buglo E."/>
            <person name="Camarena V."/>
            <person name="Gaidosh G."/>
            <person name="Shiekhattar R."/>
            <person name="Abreu L."/>
            <person name="Courel S."/>
            <person name="Burns D.K."/>
            <person name="Bai Y."/>
            <person name="Bacon C."/>
            <person name="Feely S.M.E."/>
            <person name="Castro D."/>
            <person name="Peles E."/>
            <person name="Reilly M.M."/>
            <person name="Shy M.E."/>
            <person name="Zuchner S."/>
        </authorList>
    </citation>
    <scope>ERRATUM OF PUBMED:33889941</scope>
</reference>
<reference key="13">
    <citation type="journal article" date="2023" name="Brain Commun.">
        <title>Novel variant in CADM3 causes Charcot-Marie-Tooth disease.</title>
        <authorList>
            <person name="Yalcouye A."/>
            <person name="Rebelo A.P."/>
            <person name="Cisse L."/>
            <person name="Rives L."/>
            <person name="Bamba S."/>
            <person name="Cogan J."/>
            <person name="Esoh K."/>
            <person name="Diarra S."/>
            <person name="Ezell K.M."/>
            <person name="Tamega A."/>
            <person name="Guinto C.O."/>
            <person name="Dohrn M.F."/>
            <person name="Hamid R."/>
            <person name="Fischbeck K.H."/>
            <person name="Zuchner S."/>
            <person name="Landoure G."/>
        </authorList>
    </citation>
    <scope>VARIANT CMT2FF CYS-334</scope>
    <scope>CHARACTERIZATION OF VARIANTS CMT2FF CYS-33 AND CYS-138</scope>
    <scope>SUBCELLULAR LOCATION</scope>
</reference>
<organism>
    <name type="scientific">Homo sapiens</name>
    <name type="common">Human</name>
    <dbReference type="NCBI Taxonomy" id="9606"/>
    <lineage>
        <taxon>Eukaryota</taxon>
        <taxon>Metazoa</taxon>
        <taxon>Chordata</taxon>
        <taxon>Craniata</taxon>
        <taxon>Vertebrata</taxon>
        <taxon>Euteleostomi</taxon>
        <taxon>Mammalia</taxon>
        <taxon>Eutheria</taxon>
        <taxon>Euarchontoglires</taxon>
        <taxon>Primates</taxon>
        <taxon>Haplorrhini</taxon>
        <taxon>Catarrhini</taxon>
        <taxon>Hominidae</taxon>
        <taxon>Homo</taxon>
    </lineage>
</organism>
<protein>
    <recommendedName>
        <fullName>Cell adhesion molecule 3</fullName>
    </recommendedName>
    <alternativeName>
        <fullName>Brain immunoglobulin receptor</fullName>
    </alternativeName>
    <alternativeName>
        <fullName>Immunoglobulin superfamily member 4B</fullName>
        <shortName>IgSF4B</shortName>
    </alternativeName>
    <alternativeName>
        <fullName>Nectin-like protein 1</fullName>
        <shortName>NECL-1</shortName>
    </alternativeName>
    <alternativeName>
        <fullName>Synaptic cell adhesion molecule 3</fullName>
        <shortName>SynCAM3</shortName>
    </alternativeName>
    <alternativeName>
        <fullName>TSLC1-like protein 1</fullName>
        <shortName>TSLL1</shortName>
    </alternativeName>
</protein>
<keyword id="KW-0002">3D-structure</keyword>
<keyword id="KW-0025">Alternative splicing</keyword>
<keyword id="KW-0106">Calcium</keyword>
<keyword id="KW-0130">Cell adhesion</keyword>
<keyword id="KW-0965">Cell junction</keyword>
<keyword id="KW-1003">Cell membrane</keyword>
<keyword id="KW-0144">Charcot-Marie-Tooth disease</keyword>
<keyword id="KW-0903">Direct protein sequencing</keyword>
<keyword id="KW-0225">Disease variant</keyword>
<keyword id="KW-1015">Disulfide bond</keyword>
<keyword id="KW-0325">Glycoprotein</keyword>
<keyword id="KW-0393">Immunoglobulin domain</keyword>
<keyword id="KW-0472">Membrane</keyword>
<keyword id="KW-0523">Neurodegeneration</keyword>
<keyword id="KW-0622">Neuropathy</keyword>
<keyword id="KW-0597">Phosphoprotein</keyword>
<keyword id="KW-1267">Proteomics identification</keyword>
<keyword id="KW-1185">Reference proteome</keyword>
<keyword id="KW-0677">Repeat</keyword>
<keyword id="KW-0732">Signal</keyword>
<keyword id="KW-0812">Transmembrane</keyword>
<keyword id="KW-1133">Transmembrane helix</keyword>
<feature type="signal peptide" evidence="6">
    <location>
        <begin position="1"/>
        <end position="24"/>
    </location>
</feature>
<feature type="chain" id="PRO_0000046067" description="Cell adhesion molecule 3">
    <location>
        <begin position="25"/>
        <end position="398"/>
    </location>
</feature>
<feature type="topological domain" description="Extracellular" evidence="2">
    <location>
        <begin position="25"/>
        <end position="330"/>
    </location>
</feature>
<feature type="transmembrane region" description="Helical" evidence="2">
    <location>
        <begin position="331"/>
        <end position="351"/>
    </location>
</feature>
<feature type="topological domain" description="Cytoplasmic" evidence="2">
    <location>
        <begin position="352"/>
        <end position="398"/>
    </location>
</feature>
<feature type="domain" description="Ig-like V-type">
    <location>
        <begin position="25"/>
        <end position="126"/>
    </location>
</feature>
<feature type="domain" description="Ig-like C2-type 1">
    <location>
        <begin position="130"/>
        <end position="228"/>
    </location>
</feature>
<feature type="domain" description="Ig-like C2-type 2">
    <location>
        <begin position="233"/>
        <end position="315"/>
    </location>
</feature>
<feature type="region of interest" description="Disordered" evidence="4">
    <location>
        <begin position="367"/>
        <end position="398"/>
    </location>
</feature>
<feature type="site" description="Not glycosylated" evidence="9">
    <location>
        <position position="25"/>
    </location>
</feature>
<feature type="modified residue" description="Phosphoserine" evidence="1">
    <location>
        <position position="388"/>
    </location>
</feature>
<feature type="glycosylation site" description="N-linked (GlcNAc...) asparagine" evidence="9">
    <location>
        <position position="290"/>
    </location>
</feature>
<feature type="disulfide bond" evidence="3 8">
    <location>
        <begin position="50"/>
        <end position="110"/>
    </location>
</feature>
<feature type="disulfide bond" evidence="3">
    <location>
        <begin position="152"/>
        <end position="209"/>
    </location>
</feature>
<feature type="disulfide bond" evidence="3">
    <location>
        <begin position="254"/>
        <end position="299"/>
    </location>
</feature>
<feature type="splice variant" id="VSP_017221" description="In isoform 2." evidence="12">
    <original>D</original>
    <variation>DGYWQEQDLELGTLAPLDEAISSTVWSSPDMLASQ</variation>
    <location>
        <position position="29"/>
    </location>
</feature>
<feature type="splice variant" id="VSP_022008" description="In isoform 3." evidence="13">
    <original>GKTFTVSSSVTFQVTREDDGASIVCSVNHESLKGADRSTSQRIEVLY</original>
    <variation>D</variation>
    <location>
        <begin position="185"/>
        <end position="231"/>
    </location>
</feature>
<feature type="sequence variant" id="VAR_086232" description="In CMT2FF; results in misfolding due to the creation of a non-native disulfide bond with C-152; reduces cell membrane localization; dbSNP:rs2102125471." evidence="10 11">
    <original>Y</original>
    <variation>C</variation>
    <location>
        <position position="138"/>
    </location>
</feature>
<feature type="sequence variant" id="VAR_059383" description="In dbSNP:rs3026987.">
    <original>R</original>
    <variation>W</variation>
    <location>
        <position position="162"/>
    </location>
</feature>
<feature type="sequence variant" id="VAR_088947" description="In CMT2FF; likely pathogenic; reduces cell membrane and cell junction localization." evidence="11">
    <original>G</original>
    <variation>C</variation>
    <location>
        <position position="334"/>
    </location>
</feature>
<feature type="strand" evidence="15">
    <location>
        <begin position="38"/>
        <end position="41"/>
    </location>
</feature>
<feature type="strand" evidence="15">
    <location>
        <begin position="46"/>
        <end position="51"/>
    </location>
</feature>
<feature type="strand" evidence="15">
    <location>
        <begin position="60"/>
        <end position="63"/>
    </location>
</feature>
<feature type="strand" evidence="15">
    <location>
        <begin position="69"/>
        <end position="72"/>
    </location>
</feature>
<feature type="strand" evidence="15">
    <location>
        <begin position="83"/>
        <end position="88"/>
    </location>
</feature>
<feature type="strand" evidence="15">
    <location>
        <begin position="90"/>
        <end position="97"/>
    </location>
</feature>
<feature type="helix" evidence="15">
    <location>
        <begin position="102"/>
        <end position="104"/>
    </location>
</feature>
<feature type="strand" evidence="15">
    <location>
        <begin position="106"/>
        <end position="112"/>
    </location>
</feature>
<feature type="strand" evidence="15">
    <location>
        <begin position="114"/>
        <end position="116"/>
    </location>
</feature>
<feature type="strand" evidence="15">
    <location>
        <begin position="118"/>
        <end position="127"/>
    </location>
</feature>
<accession>Q8N126</accession>
<accession>Q8IZQ9</accession>
<accession>Q9NVJ5</accession>
<accession>Q9UJP1</accession>
<dbReference type="EMBL" id="AF363367">
    <property type="protein sequence ID" value="AAM60749.1"/>
    <property type="molecule type" value="mRNA"/>
</dbReference>
<dbReference type="EMBL" id="AF062733">
    <property type="protein sequence ID" value="AAD17540.2"/>
    <property type="molecule type" value="mRNA"/>
</dbReference>
<dbReference type="EMBL" id="AY046418">
    <property type="protein sequence ID" value="AAL02143.1"/>
    <property type="molecule type" value="mRNA"/>
</dbReference>
<dbReference type="EMBL" id="AY358332">
    <property type="protein sequence ID" value="AAQ88698.1"/>
    <property type="molecule type" value="mRNA"/>
</dbReference>
<dbReference type="EMBL" id="AL035403">
    <property type="status" value="NOT_ANNOTATED_CDS"/>
    <property type="molecule type" value="Genomic_DNA"/>
</dbReference>
<dbReference type="EMBL" id="AF529206">
    <property type="protein sequence ID" value="AAN75603.1"/>
    <property type="molecule type" value="mRNA"/>
</dbReference>
<dbReference type="EMBL" id="AK001560">
    <property type="protein sequence ID" value="BAA91756.1"/>
    <property type="status" value="ALT_INIT"/>
    <property type="molecule type" value="mRNA"/>
</dbReference>
<dbReference type="CCDS" id="CCDS1182.1">
    <molecule id="Q8N126-2"/>
</dbReference>
<dbReference type="CCDS" id="CCDS44251.1">
    <molecule id="Q8N126-1"/>
</dbReference>
<dbReference type="RefSeq" id="NP_001120645.1">
    <molecule id="Q8N126-1"/>
    <property type="nucleotide sequence ID" value="NM_001127173.3"/>
</dbReference>
<dbReference type="RefSeq" id="NP_001333439.1">
    <molecule id="Q8N126-3"/>
    <property type="nucleotide sequence ID" value="NM_001346510.2"/>
</dbReference>
<dbReference type="RefSeq" id="NP_067012.1">
    <molecule id="Q8N126-2"/>
    <property type="nucleotide sequence ID" value="NM_021189.5"/>
</dbReference>
<dbReference type="PDB" id="1Z9M">
    <property type="method" value="X-ray"/>
    <property type="resolution" value="2.40 A"/>
    <property type="chains" value="A/B=25-135"/>
</dbReference>
<dbReference type="PDBsum" id="1Z9M"/>
<dbReference type="SMR" id="Q8N126"/>
<dbReference type="BioGRID" id="121793">
    <property type="interactions" value="2"/>
</dbReference>
<dbReference type="FunCoup" id="Q8N126">
    <property type="interactions" value="241"/>
</dbReference>
<dbReference type="IntAct" id="Q8N126">
    <property type="interactions" value="2"/>
</dbReference>
<dbReference type="STRING" id="9606.ENSP00000357106"/>
<dbReference type="GlyCosmos" id="Q8N126">
    <property type="glycosylation" value="1 site, No reported glycans"/>
</dbReference>
<dbReference type="GlyGen" id="Q8N126">
    <property type="glycosylation" value="2 sites, 3 N-linked glycans (1 site), 1 O-linked glycan (1 site)"/>
</dbReference>
<dbReference type="iPTMnet" id="Q8N126"/>
<dbReference type="PhosphoSitePlus" id="Q8N126"/>
<dbReference type="SwissPalm" id="Q8N126"/>
<dbReference type="BioMuta" id="CADM3"/>
<dbReference type="DMDM" id="74759761"/>
<dbReference type="MassIVE" id="Q8N126"/>
<dbReference type="PaxDb" id="9606-ENSP00000357106"/>
<dbReference type="PeptideAtlas" id="Q8N126"/>
<dbReference type="ProteomicsDB" id="71524">
    <molecule id="Q8N126-1"/>
</dbReference>
<dbReference type="ProteomicsDB" id="71525">
    <molecule id="Q8N126-2"/>
</dbReference>
<dbReference type="ProteomicsDB" id="71526">
    <molecule id="Q8N126-3"/>
</dbReference>
<dbReference type="Pumba" id="Q8N126"/>
<dbReference type="Antibodypedia" id="669">
    <property type="antibodies" value="344 antibodies from 34 providers"/>
</dbReference>
<dbReference type="DNASU" id="57863"/>
<dbReference type="Ensembl" id="ENST00000368124.8">
    <molecule id="Q8N126-2"/>
    <property type="protein sequence ID" value="ENSP00000357106.4"/>
    <property type="gene ID" value="ENSG00000162706.13"/>
</dbReference>
<dbReference type="Ensembl" id="ENST00000368125.9">
    <molecule id="Q8N126-1"/>
    <property type="protein sequence ID" value="ENSP00000357107.4"/>
    <property type="gene ID" value="ENSG00000162706.13"/>
</dbReference>
<dbReference type="GeneID" id="57863"/>
<dbReference type="KEGG" id="hsa:57863"/>
<dbReference type="MANE-Select" id="ENST00000368125.9">
    <property type="protein sequence ID" value="ENSP00000357107.4"/>
    <property type="RefSeq nucleotide sequence ID" value="NM_001127173.3"/>
    <property type="RefSeq protein sequence ID" value="NP_001120645.1"/>
</dbReference>
<dbReference type="UCSC" id="uc001ftk.3">
    <molecule id="Q8N126-1"/>
    <property type="organism name" value="human"/>
</dbReference>
<dbReference type="AGR" id="HGNC:17601"/>
<dbReference type="CTD" id="57863"/>
<dbReference type="DisGeNET" id="57863"/>
<dbReference type="GeneCards" id="CADM3"/>
<dbReference type="HGNC" id="HGNC:17601">
    <property type="gene designation" value="CADM3"/>
</dbReference>
<dbReference type="HPA" id="ENSG00000162706">
    <property type="expression patterns" value="Tissue enriched (brain)"/>
</dbReference>
<dbReference type="MalaCards" id="CADM3"/>
<dbReference type="MIM" id="609743">
    <property type="type" value="gene"/>
</dbReference>
<dbReference type="MIM" id="619519">
    <property type="type" value="phenotype"/>
</dbReference>
<dbReference type="neXtProt" id="NX_Q8N126"/>
<dbReference type="OpenTargets" id="ENSG00000162706"/>
<dbReference type="PharmGKB" id="PA162380906"/>
<dbReference type="VEuPathDB" id="HostDB:ENSG00000162706"/>
<dbReference type="eggNOG" id="ENOG502QWJ8">
    <property type="taxonomic scope" value="Eukaryota"/>
</dbReference>
<dbReference type="GeneTree" id="ENSGT00940000159779"/>
<dbReference type="HOGENOM" id="CLU_047574_1_0_1"/>
<dbReference type="InParanoid" id="Q8N126"/>
<dbReference type="OMA" id="ANVTCTV"/>
<dbReference type="OrthoDB" id="547680at2759"/>
<dbReference type="PAN-GO" id="Q8N126">
    <property type="GO annotations" value="2 GO annotations based on evolutionary models"/>
</dbReference>
<dbReference type="PhylomeDB" id="Q8N126"/>
<dbReference type="TreeFam" id="TF326804"/>
<dbReference type="PathwayCommons" id="Q8N126"/>
<dbReference type="Reactome" id="R-HSA-418990">
    <property type="pathway name" value="Adherens junctions interactions"/>
</dbReference>
<dbReference type="Reactome" id="R-HSA-420597">
    <property type="pathway name" value="Nectin/Necl trans heterodimerization"/>
</dbReference>
<dbReference type="SignaLink" id="Q8N126"/>
<dbReference type="BioGRID-ORCS" id="57863">
    <property type="hits" value="9 hits in 1139 CRISPR screens"/>
</dbReference>
<dbReference type="ChiTaRS" id="CADM3">
    <property type="organism name" value="human"/>
</dbReference>
<dbReference type="EvolutionaryTrace" id="Q8N126"/>
<dbReference type="GeneWiki" id="CADM3"/>
<dbReference type="GenomeRNAi" id="57863"/>
<dbReference type="Pharos" id="Q8N126">
    <property type="development level" value="Tbio"/>
</dbReference>
<dbReference type="PRO" id="PR:Q8N126"/>
<dbReference type="Proteomes" id="UP000005640">
    <property type="component" value="Chromosome 1"/>
</dbReference>
<dbReference type="RNAct" id="Q8N126">
    <property type="molecule type" value="protein"/>
</dbReference>
<dbReference type="Bgee" id="ENSG00000162706">
    <property type="expression patterns" value="Expressed in cerebellar hemisphere and 157 other cell types or tissues"/>
</dbReference>
<dbReference type="ExpressionAtlas" id="Q8N126">
    <property type="expression patterns" value="baseline and differential"/>
</dbReference>
<dbReference type="GO" id="GO:0005911">
    <property type="term" value="C:cell-cell junction"/>
    <property type="evidence" value="ECO:0000250"/>
    <property type="project" value="HGNC-UCL"/>
</dbReference>
<dbReference type="GO" id="GO:0005886">
    <property type="term" value="C:plasma membrane"/>
    <property type="evidence" value="ECO:0000304"/>
    <property type="project" value="Reactome"/>
</dbReference>
<dbReference type="GO" id="GO:0042734">
    <property type="term" value="C:presynaptic membrane"/>
    <property type="evidence" value="ECO:0000318"/>
    <property type="project" value="GO_Central"/>
</dbReference>
<dbReference type="GO" id="GO:0042803">
    <property type="term" value="F:protein homodimerization activity"/>
    <property type="evidence" value="ECO:0000250"/>
    <property type="project" value="HGNC-UCL"/>
</dbReference>
<dbReference type="GO" id="GO:0007157">
    <property type="term" value="P:heterophilic cell-cell adhesion via plasma membrane cell adhesion molecules"/>
    <property type="evidence" value="ECO:0000250"/>
    <property type="project" value="HGNC-UCL"/>
</dbReference>
<dbReference type="GO" id="GO:0007156">
    <property type="term" value="P:homophilic cell adhesion via plasma membrane adhesion molecules"/>
    <property type="evidence" value="ECO:0000250"/>
    <property type="project" value="HGNC-UCL"/>
</dbReference>
<dbReference type="CDD" id="cd07705">
    <property type="entry name" value="IgI_2_Necl-1"/>
    <property type="match status" value="1"/>
</dbReference>
<dbReference type="CDD" id="cd05882">
    <property type="entry name" value="IgV_1_Necl-1"/>
    <property type="match status" value="1"/>
</dbReference>
<dbReference type="FunFam" id="2.60.40.10:FF:000013">
    <property type="entry name" value="cell adhesion molecule 1 isoform X1"/>
    <property type="match status" value="1"/>
</dbReference>
<dbReference type="FunFam" id="2.60.40.10:FF:000510">
    <property type="entry name" value="cell adhesion molecule 3 isoform X1"/>
    <property type="match status" value="1"/>
</dbReference>
<dbReference type="FunFam" id="2.60.40.10:FF:000894">
    <property type="entry name" value="cell adhesion molecule 3 isoform X1"/>
    <property type="match status" value="1"/>
</dbReference>
<dbReference type="Gene3D" id="2.60.40.10">
    <property type="entry name" value="Immunoglobulins"/>
    <property type="match status" value="3"/>
</dbReference>
<dbReference type="InterPro" id="IPR013162">
    <property type="entry name" value="CD80_C2-set"/>
</dbReference>
<dbReference type="InterPro" id="IPR007110">
    <property type="entry name" value="Ig-like_dom"/>
</dbReference>
<dbReference type="InterPro" id="IPR036179">
    <property type="entry name" value="Ig-like_dom_sf"/>
</dbReference>
<dbReference type="InterPro" id="IPR013783">
    <property type="entry name" value="Ig-like_fold"/>
</dbReference>
<dbReference type="InterPro" id="IPR003599">
    <property type="entry name" value="Ig_sub"/>
</dbReference>
<dbReference type="InterPro" id="IPR003598">
    <property type="entry name" value="Ig_sub2"/>
</dbReference>
<dbReference type="InterPro" id="IPR013106">
    <property type="entry name" value="Ig_V-set"/>
</dbReference>
<dbReference type="InterPro" id="IPR003585">
    <property type="entry name" value="Neurexin-like"/>
</dbReference>
<dbReference type="PANTHER" id="PTHR45889:SF5">
    <property type="entry name" value="CELL ADHESION MOLECULE 3"/>
    <property type="match status" value="1"/>
</dbReference>
<dbReference type="PANTHER" id="PTHR45889">
    <property type="entry name" value="IG-LIKE DOMAIN-CONTAINING PROTEIN"/>
    <property type="match status" value="1"/>
</dbReference>
<dbReference type="Pfam" id="PF08205">
    <property type="entry name" value="C2-set_2"/>
    <property type="match status" value="1"/>
</dbReference>
<dbReference type="Pfam" id="PF13927">
    <property type="entry name" value="Ig_3"/>
    <property type="match status" value="1"/>
</dbReference>
<dbReference type="Pfam" id="PF07686">
    <property type="entry name" value="V-set"/>
    <property type="match status" value="1"/>
</dbReference>
<dbReference type="SMART" id="SM00294">
    <property type="entry name" value="4.1m"/>
    <property type="match status" value="1"/>
</dbReference>
<dbReference type="SMART" id="SM00409">
    <property type="entry name" value="IG"/>
    <property type="match status" value="3"/>
</dbReference>
<dbReference type="SMART" id="SM00408">
    <property type="entry name" value="IGc2"/>
    <property type="match status" value="3"/>
</dbReference>
<dbReference type="SUPFAM" id="SSF48726">
    <property type="entry name" value="Immunoglobulin"/>
    <property type="match status" value="3"/>
</dbReference>
<dbReference type="PROSITE" id="PS50835">
    <property type="entry name" value="IG_LIKE"/>
    <property type="match status" value="3"/>
</dbReference>
<comment type="function">
    <text evidence="1">Involved in cell-cell adhesion. Has both calcium-independent homophilic cell-cell adhesion activity and calcium-independent heterophilic cell-cell adhesion activity with IGSF4, NECTIN1 and NECTIN3. Interaction with EPB41L1 may regulate structure or function of cell-cell junctions (By similarity).</text>
</comment>
<comment type="subunit">
    <text evidence="1">Homodimer. Can form trans-heterodimers with NECTIN3. Interacts with EPB41L1, DLG3, PALS2 and CASK (By similarity).</text>
</comment>
<comment type="interaction">
    <interactant intactId="EBI-18961338">
        <id>Q8N126</id>
    </interactant>
    <interactant intactId="EBI-2855401">
        <id>Q9BY50</id>
        <label>SEC11C</label>
    </interactant>
    <organismsDiffer>false</organismsDiffer>
    <experiments>3</experiments>
</comment>
<comment type="subcellular location">
    <subcellularLocation>
        <location evidence="11">Cell membrane</location>
        <topology evidence="2">Single-pass type I membrane protein</topology>
    </subcellularLocation>
    <subcellularLocation>
        <location evidence="11">Cell junction</location>
    </subcellularLocation>
</comment>
<comment type="alternative products">
    <event type="alternative splicing"/>
    <isoform>
        <id>Q8N126-1</id>
        <name>1</name>
        <sequence type="displayed"/>
    </isoform>
    <isoform>
        <id>Q8N126-2</id>
        <name>2</name>
        <sequence type="described" ref="VSP_017221"/>
    </isoform>
    <isoform>
        <id>Q8N126-3</id>
        <name>3</name>
        <sequence type="described" ref="VSP_022008"/>
    </isoform>
</comment>
<comment type="tissue specificity">
    <text evidence="5 7 9">Isoform 1 is expressed mainly in adult and fetal brain. Isoform 2 is highly expressed in adult brain and weakly expressed in placenta. In brain, Isoform 2 is highly expressed in cerebellum.</text>
</comment>
<comment type="induction">
    <text evidence="5">Markedly in glioma cell lines and prostate cancer cell lines.</text>
</comment>
<comment type="domain">
    <text evidence="1">The cytoplasmic region mediates interaction with EPB41L1, DLG3, PALS2 and CASK.</text>
</comment>
<comment type="disease" evidence="10 11">
    <disease id="DI-06222">
        <name>Charcot-Marie-Tooth disease, axonal, type 2FF</name>
        <acronym>CMT2FF</acronym>
        <description>A dominant axonal form of Charcot-Marie-Tooth disease, a disorder of the peripheral nervous system, characterized by progressive weakness and atrophy, initially of the peroneal muscles and later of the distal muscles of the arms. Charcot-Marie-Tooth disease is classified in two main groups on the basis of electrophysiologic properties and histopathology: primary peripheral demyelinating neuropathies (designated CMT1 when they are dominantly inherited) and primary peripheral axonal neuropathies (CMT2). Neuropathies of the CMT2 group are characterized by signs of axonal degeneration in the absence of obvious myelin alterations, normal or slightly reduced nerve conduction velocities, and progressive distal muscle weakness and atrophy. CMT2FF is characterized by early-childhood onset of difficulties walking or running due to atrophy and weakness of the lower limbs. Some patients lose independent ambulation. There is also prominent involvement of the upper limbs.</description>
        <dbReference type="MIM" id="619519"/>
    </disease>
    <text>The disease is caused by variants affecting the gene represented in this entry.</text>
</comment>
<comment type="similarity">
    <text evidence="14">Belongs to the nectin family.</text>
</comment>
<comment type="sequence caution" evidence="14">
    <conflict type="erroneous initiation">
        <sequence resource="EMBL-CDS" id="BAA91756"/>
    </conflict>
</comment>
<gene>
    <name type="primary">CADM3</name>
    <name type="synonym">IGSF4B</name>
    <name type="synonym">NECL1</name>
    <name type="synonym">SYNCAM3</name>
    <name type="synonym">TSLL1</name>
    <name type="ORF">UNQ225/PRO258</name>
</gene>
<proteinExistence type="evidence at protein level"/>
<evidence type="ECO:0000250" key="1">
    <source>
        <dbReference type="UniProtKB" id="Q99N28"/>
    </source>
</evidence>
<evidence type="ECO:0000255" key="2"/>
<evidence type="ECO:0000255" key="3">
    <source>
        <dbReference type="PROSITE-ProRule" id="PRU00114"/>
    </source>
</evidence>
<evidence type="ECO:0000256" key="4">
    <source>
        <dbReference type="SAM" id="MobiDB-lite"/>
    </source>
</evidence>
<evidence type="ECO:0000269" key="5">
    <source>
    </source>
</evidence>
<evidence type="ECO:0000269" key="6">
    <source>
    </source>
</evidence>
<evidence type="ECO:0000269" key="7">
    <source>
    </source>
</evidence>
<evidence type="ECO:0000269" key="8">
    <source>
    </source>
</evidence>
<evidence type="ECO:0000269" key="9">
    <source>
    </source>
</evidence>
<evidence type="ECO:0000269" key="10">
    <source>
    </source>
</evidence>
<evidence type="ECO:0000269" key="11">
    <source>
    </source>
</evidence>
<evidence type="ECO:0000303" key="12">
    <source>
    </source>
</evidence>
<evidence type="ECO:0000303" key="13">
    <source ref="6"/>
</evidence>
<evidence type="ECO:0000305" key="14"/>
<evidence type="ECO:0007829" key="15">
    <source>
        <dbReference type="PDB" id="1Z9M"/>
    </source>
</evidence>